<accession>Q9DAX2</accession>
<accession>Q9WUA4</accession>
<dbReference type="EC" id="3.1.3.-" evidence="2"/>
<dbReference type="EC" id="3.1.3.4" evidence="2"/>
<dbReference type="EMBL" id="AF123611">
    <property type="protein sequence ID" value="AAD24061.1"/>
    <property type="molecule type" value="mRNA"/>
</dbReference>
<dbReference type="EMBL" id="AK005452">
    <property type="protein sequence ID" value="BAB24045.1"/>
    <property type="molecule type" value="mRNA"/>
</dbReference>
<dbReference type="EMBL" id="AK049581">
    <property type="protein sequence ID" value="BAC33824.1"/>
    <property type="molecule type" value="mRNA"/>
</dbReference>
<dbReference type="EMBL" id="BC010332">
    <property type="protein sequence ID" value="AAH10332.1"/>
    <property type="molecule type" value="mRNA"/>
</dbReference>
<dbReference type="CCDS" id="CCDS35966.1">
    <molecule id="Q9DAX2-1"/>
</dbReference>
<dbReference type="RefSeq" id="NP_001289318.1">
    <property type="nucleotide sequence ID" value="NM_001302389.1"/>
</dbReference>
<dbReference type="RefSeq" id="NP_001289319.1">
    <property type="nucleotide sequence ID" value="NM_001302390.1"/>
</dbReference>
<dbReference type="RefSeq" id="NP_001289371.1">
    <property type="nucleotide sequence ID" value="NM_001302442.1"/>
</dbReference>
<dbReference type="RefSeq" id="NP_056632.2">
    <molecule id="Q9DAX2-1"/>
    <property type="nucleotide sequence ID" value="NM_015817.3"/>
</dbReference>
<dbReference type="BioGRID" id="206116">
    <property type="interactions" value="1"/>
</dbReference>
<dbReference type="FunCoup" id="Q9DAX2">
    <property type="interactions" value="723"/>
</dbReference>
<dbReference type="IntAct" id="Q9DAX2">
    <property type="interactions" value="1"/>
</dbReference>
<dbReference type="STRING" id="10090.ENSMUSP00000069670"/>
<dbReference type="GlyCosmos" id="Q9DAX2">
    <property type="glycosylation" value="2 sites, No reported glycans"/>
</dbReference>
<dbReference type="GlyGen" id="Q9DAX2">
    <property type="glycosylation" value="2 sites, 1 N-linked glycan (1 site)"/>
</dbReference>
<dbReference type="iPTMnet" id="Q9DAX2"/>
<dbReference type="PhosphoSitePlus" id="Q9DAX2"/>
<dbReference type="PaxDb" id="10090-ENSMUSP00000069670"/>
<dbReference type="ProteomicsDB" id="289938">
    <molecule id="Q9DAX2-1"/>
</dbReference>
<dbReference type="ProteomicsDB" id="289939">
    <molecule id="Q9DAX2-2"/>
</dbReference>
<dbReference type="Antibodypedia" id="22287">
    <property type="antibodies" value="157 antibodies from 22 providers"/>
</dbReference>
<dbReference type="DNASU" id="50784"/>
<dbReference type="Ensembl" id="ENSMUST00000063879.13">
    <molecule id="Q9DAX2-1"/>
    <property type="protein sequence ID" value="ENSMUSP00000069670.6"/>
    <property type="gene ID" value="ENSMUSG00000052151.13"/>
</dbReference>
<dbReference type="GeneID" id="50784"/>
<dbReference type="KEGG" id="mmu:50784"/>
<dbReference type="UCSC" id="uc007fyq.2">
    <molecule id="Q9DAX2-1"/>
    <property type="organism name" value="mouse"/>
</dbReference>
<dbReference type="UCSC" id="uc007fyt.1">
    <molecule id="Q9DAX2-2"/>
    <property type="organism name" value="mouse"/>
</dbReference>
<dbReference type="AGR" id="MGI:1354945"/>
<dbReference type="CTD" id="8612"/>
<dbReference type="MGI" id="MGI:1354945">
    <property type="gene designation" value="Plpp2"/>
</dbReference>
<dbReference type="VEuPathDB" id="HostDB:ENSMUSG00000052151"/>
<dbReference type="eggNOG" id="KOG3030">
    <property type="taxonomic scope" value="Eukaryota"/>
</dbReference>
<dbReference type="GeneTree" id="ENSGT00940000155885"/>
<dbReference type="InParanoid" id="Q9DAX2"/>
<dbReference type="OMA" id="CWRWARL"/>
<dbReference type="OrthoDB" id="8907274at2759"/>
<dbReference type="PhylomeDB" id="Q9DAX2"/>
<dbReference type="TreeFam" id="TF316040"/>
<dbReference type="Reactome" id="R-MMU-9845614">
    <property type="pathway name" value="Sphingolipid catabolism"/>
</dbReference>
<dbReference type="UniPathway" id="UPA00085"/>
<dbReference type="BioGRID-ORCS" id="50784">
    <property type="hits" value="3 hits in 50 CRISPR screens"/>
</dbReference>
<dbReference type="ChiTaRS" id="Plpp2">
    <property type="organism name" value="mouse"/>
</dbReference>
<dbReference type="PRO" id="PR:Q9DAX2"/>
<dbReference type="Proteomes" id="UP000000589">
    <property type="component" value="Chromosome 10"/>
</dbReference>
<dbReference type="RNAct" id="Q9DAX2">
    <property type="molecule type" value="protein"/>
</dbReference>
<dbReference type="Bgee" id="ENSMUSG00000052151">
    <property type="expression patterns" value="Expressed in metanephric ureteric bud and 230 other cell types or tissues"/>
</dbReference>
<dbReference type="ExpressionAtlas" id="Q9DAX2">
    <property type="expression patterns" value="baseline and differential"/>
</dbReference>
<dbReference type="GO" id="GO:0005901">
    <property type="term" value="C:caveola"/>
    <property type="evidence" value="ECO:0000250"/>
    <property type="project" value="UniProtKB"/>
</dbReference>
<dbReference type="GO" id="GO:0005769">
    <property type="term" value="C:early endosome"/>
    <property type="evidence" value="ECO:0000250"/>
    <property type="project" value="UniProtKB"/>
</dbReference>
<dbReference type="GO" id="GO:0031901">
    <property type="term" value="C:early endosome membrane"/>
    <property type="evidence" value="ECO:0007669"/>
    <property type="project" value="UniProtKB-SubCell"/>
</dbReference>
<dbReference type="GO" id="GO:0005783">
    <property type="term" value="C:endoplasmic reticulum"/>
    <property type="evidence" value="ECO:0000250"/>
    <property type="project" value="UniProtKB"/>
</dbReference>
<dbReference type="GO" id="GO:0005789">
    <property type="term" value="C:endoplasmic reticulum membrane"/>
    <property type="evidence" value="ECO:0007669"/>
    <property type="project" value="UniProtKB-SubCell"/>
</dbReference>
<dbReference type="GO" id="GO:0016020">
    <property type="term" value="C:membrane"/>
    <property type="evidence" value="ECO:0000250"/>
    <property type="project" value="UniProtKB"/>
</dbReference>
<dbReference type="GO" id="GO:0005886">
    <property type="term" value="C:plasma membrane"/>
    <property type="evidence" value="ECO:0000250"/>
    <property type="project" value="UniProtKB"/>
</dbReference>
<dbReference type="GO" id="GO:0106235">
    <property type="term" value="F:ceramide-1-phosphate phosphatase activity"/>
    <property type="evidence" value="ECO:0000250"/>
    <property type="project" value="UniProtKB"/>
</dbReference>
<dbReference type="GO" id="GO:0008195">
    <property type="term" value="F:phosphatidate phosphatase activity"/>
    <property type="evidence" value="ECO:0000250"/>
    <property type="project" value="UniProtKB"/>
</dbReference>
<dbReference type="GO" id="GO:0042392">
    <property type="term" value="F:sphingosine-1-phosphate phosphatase activity"/>
    <property type="evidence" value="ECO:0000250"/>
    <property type="project" value="UniProtKB"/>
</dbReference>
<dbReference type="GO" id="GO:0006672">
    <property type="term" value="P:ceramide metabolic process"/>
    <property type="evidence" value="ECO:0000250"/>
    <property type="project" value="UniProtKB"/>
</dbReference>
<dbReference type="GO" id="GO:0046839">
    <property type="term" value="P:phospholipid dephosphorylation"/>
    <property type="evidence" value="ECO:0000250"/>
    <property type="project" value="UniProtKB"/>
</dbReference>
<dbReference type="GO" id="GO:0006644">
    <property type="term" value="P:phospholipid metabolic process"/>
    <property type="evidence" value="ECO:0000250"/>
    <property type="project" value="UniProtKB"/>
</dbReference>
<dbReference type="GO" id="GO:0006670">
    <property type="term" value="P:sphingosine metabolic process"/>
    <property type="evidence" value="ECO:0000250"/>
    <property type="project" value="UniProtKB"/>
</dbReference>
<dbReference type="CDD" id="cd03384">
    <property type="entry name" value="PAP2_wunen"/>
    <property type="match status" value="1"/>
</dbReference>
<dbReference type="FunFam" id="1.20.144.10:FF:000016">
    <property type="entry name" value="Phospholipid phosphatase 2"/>
    <property type="match status" value="1"/>
</dbReference>
<dbReference type="Gene3D" id="1.20.144.10">
    <property type="entry name" value="Phosphatidic acid phosphatase type 2/haloperoxidase"/>
    <property type="match status" value="1"/>
</dbReference>
<dbReference type="InterPro" id="IPR036938">
    <property type="entry name" value="P_Acid_Pase_2/haloperoxi_sf"/>
</dbReference>
<dbReference type="InterPro" id="IPR000326">
    <property type="entry name" value="P_Acid_Pase_2/haloperoxidase"/>
</dbReference>
<dbReference type="InterPro" id="IPR043216">
    <property type="entry name" value="PA_PP_rel"/>
</dbReference>
<dbReference type="PANTHER" id="PTHR10165">
    <property type="entry name" value="LIPID PHOSPHATE PHOSPHATASE"/>
    <property type="match status" value="1"/>
</dbReference>
<dbReference type="PANTHER" id="PTHR10165:SF25">
    <property type="entry name" value="PHOSPHOLIPID PHOSPHATASE 2"/>
    <property type="match status" value="1"/>
</dbReference>
<dbReference type="Pfam" id="PF01569">
    <property type="entry name" value="PAP2"/>
    <property type="match status" value="1"/>
</dbReference>
<dbReference type="SMART" id="SM00014">
    <property type="entry name" value="acidPPc"/>
    <property type="match status" value="1"/>
</dbReference>
<dbReference type="SUPFAM" id="SSF48317">
    <property type="entry name" value="Acid phosphatase/Vanadium-dependent haloperoxidase"/>
    <property type="match status" value="1"/>
</dbReference>
<organism>
    <name type="scientific">Mus musculus</name>
    <name type="common">Mouse</name>
    <dbReference type="NCBI Taxonomy" id="10090"/>
    <lineage>
        <taxon>Eukaryota</taxon>
        <taxon>Metazoa</taxon>
        <taxon>Chordata</taxon>
        <taxon>Craniata</taxon>
        <taxon>Vertebrata</taxon>
        <taxon>Euteleostomi</taxon>
        <taxon>Mammalia</taxon>
        <taxon>Eutheria</taxon>
        <taxon>Euarchontoglires</taxon>
        <taxon>Glires</taxon>
        <taxon>Rodentia</taxon>
        <taxon>Myomorpha</taxon>
        <taxon>Muroidea</taxon>
        <taxon>Muridae</taxon>
        <taxon>Murinae</taxon>
        <taxon>Mus</taxon>
        <taxon>Mus</taxon>
    </lineage>
</organism>
<comment type="function">
    <text evidence="2 3">Magnesium-independent phospholipid phosphatase that catalyzes the dephosphorylation of a variety of glycerolipid and sphingolipid phosphate esters including phosphatidate/PA, lysophosphatidate/LPA, sphingosine 1-phosphate/S1P and ceramide 1-phosphate/C1P. Has no apparent extracellular phosphatase activity and therefore most probably acts intracellularly. Also acts on N-oleoyl ethanolamine phosphate/N-(9Z-octadecenoyl)-ethanolamine phosphate, a potential physiological compound. Through dephosphorylation of these bioactive lipid mediators produces new bioactive compounds and may regulate signal transduction in different cellular processes (By similarity). Indirectly regulates, for instance, cell cycle G1/S phase transition through its phospholipid phosphatase activity (By similarity).</text>
</comment>
<comment type="catalytic activity">
    <reaction evidence="2">
        <text>a 1,2-diacyl-sn-glycero-3-phosphate + H2O = a 1,2-diacyl-sn-glycerol + phosphate</text>
        <dbReference type="Rhea" id="RHEA:27429"/>
        <dbReference type="ChEBI" id="CHEBI:15377"/>
        <dbReference type="ChEBI" id="CHEBI:17815"/>
        <dbReference type="ChEBI" id="CHEBI:43474"/>
        <dbReference type="ChEBI" id="CHEBI:58608"/>
        <dbReference type="EC" id="3.1.3.4"/>
    </reaction>
    <physiologicalReaction direction="left-to-right" evidence="2">
        <dbReference type="Rhea" id="RHEA:27430"/>
    </physiologicalReaction>
</comment>
<comment type="catalytic activity">
    <reaction evidence="2">
        <text>1,2-dihexadecanoyl-sn-glycero-3-phosphate + H2O = 1,2-dihexadecanoyl-sn-glycerol + phosphate</text>
        <dbReference type="Rhea" id="RHEA:43236"/>
        <dbReference type="ChEBI" id="CHEBI:15377"/>
        <dbReference type="ChEBI" id="CHEBI:43474"/>
        <dbReference type="ChEBI" id="CHEBI:72859"/>
        <dbReference type="ChEBI" id="CHEBI:82929"/>
    </reaction>
    <physiologicalReaction direction="left-to-right" evidence="2">
        <dbReference type="Rhea" id="RHEA:43237"/>
    </physiologicalReaction>
</comment>
<comment type="catalytic activity">
    <reaction evidence="2">
        <text>1,2-di-(9Z-octadecenoyl)-sn-glycero-3-phosphate + H2O = 1,2-di-(9Z-octadecenoyl)-sn-glycerol + phosphate</text>
        <dbReference type="Rhea" id="RHEA:43244"/>
        <dbReference type="ChEBI" id="CHEBI:15377"/>
        <dbReference type="ChEBI" id="CHEBI:43474"/>
        <dbReference type="ChEBI" id="CHEBI:52333"/>
        <dbReference type="ChEBI" id="CHEBI:74546"/>
    </reaction>
    <physiologicalReaction direction="left-to-right" evidence="2">
        <dbReference type="Rhea" id="RHEA:43245"/>
    </physiologicalReaction>
</comment>
<comment type="catalytic activity">
    <reaction evidence="2">
        <text>a monoacyl-sn-glycero-3-phosphate + H2O = a monoacylglycerol + phosphate</text>
        <dbReference type="Rhea" id="RHEA:46736"/>
        <dbReference type="ChEBI" id="CHEBI:15377"/>
        <dbReference type="ChEBI" id="CHEBI:17408"/>
        <dbReference type="ChEBI" id="CHEBI:43474"/>
        <dbReference type="ChEBI" id="CHEBI:77589"/>
    </reaction>
    <physiologicalReaction direction="left-to-right" evidence="2">
        <dbReference type="Rhea" id="RHEA:46737"/>
    </physiologicalReaction>
</comment>
<comment type="catalytic activity">
    <reaction evidence="2">
        <text>(9Z)-octadecenoyl-sn-glycero-3-phosphate + H2O = (9Z-octadecenoyl)-glycerol + phosphate</text>
        <dbReference type="Rhea" id="RHEA:50884"/>
        <dbReference type="ChEBI" id="CHEBI:15377"/>
        <dbReference type="ChEBI" id="CHEBI:43474"/>
        <dbReference type="ChEBI" id="CHEBI:75937"/>
        <dbReference type="ChEBI" id="CHEBI:84973"/>
    </reaction>
    <physiologicalReaction direction="left-to-right" evidence="2">
        <dbReference type="Rhea" id="RHEA:50885"/>
    </physiologicalReaction>
</comment>
<comment type="catalytic activity">
    <reaction evidence="2">
        <text>sphing-4-enine 1-phosphate + H2O = sphing-4-enine + phosphate</text>
        <dbReference type="Rhea" id="RHEA:27518"/>
        <dbReference type="ChEBI" id="CHEBI:15377"/>
        <dbReference type="ChEBI" id="CHEBI:43474"/>
        <dbReference type="ChEBI" id="CHEBI:57756"/>
        <dbReference type="ChEBI" id="CHEBI:60119"/>
    </reaction>
    <physiologicalReaction direction="left-to-right" evidence="2">
        <dbReference type="Rhea" id="RHEA:27519"/>
    </physiologicalReaction>
</comment>
<comment type="catalytic activity">
    <reaction evidence="2">
        <text>an N-acylsphing-4-enine 1-phosphate + H2O = an N-acylsphing-4-enine + phosphate</text>
        <dbReference type="Rhea" id="RHEA:33743"/>
        <dbReference type="ChEBI" id="CHEBI:15377"/>
        <dbReference type="ChEBI" id="CHEBI:43474"/>
        <dbReference type="ChEBI" id="CHEBI:52639"/>
        <dbReference type="ChEBI" id="CHEBI:57674"/>
    </reaction>
    <physiologicalReaction direction="left-to-right" evidence="2">
        <dbReference type="Rhea" id="RHEA:33744"/>
    </physiologicalReaction>
</comment>
<comment type="catalytic activity">
    <reaction evidence="2">
        <text>N-(octanoyl)-sphing-4-enine-1-phosphate + H2O = N-octanoylsphing-4-enine + phosphate</text>
        <dbReference type="Rhea" id="RHEA:62040"/>
        <dbReference type="ChEBI" id="CHEBI:15377"/>
        <dbReference type="ChEBI" id="CHEBI:43474"/>
        <dbReference type="ChEBI" id="CHEBI:45815"/>
        <dbReference type="ChEBI" id="CHEBI:85376"/>
    </reaction>
    <physiologicalReaction direction="left-to-right" evidence="2">
        <dbReference type="Rhea" id="RHEA:62041"/>
    </physiologicalReaction>
</comment>
<comment type="catalytic activity">
    <reaction evidence="2">
        <text>N-(9Z-octadecenoyl)-ethanolamine phosphate + H2O = N-(9Z-octadecenoyl) ethanolamine + phosphate</text>
        <dbReference type="Rhea" id="RHEA:62160"/>
        <dbReference type="ChEBI" id="CHEBI:15377"/>
        <dbReference type="ChEBI" id="CHEBI:43474"/>
        <dbReference type="ChEBI" id="CHEBI:71466"/>
        <dbReference type="ChEBI" id="CHEBI:145465"/>
    </reaction>
    <physiologicalReaction direction="left-to-right" evidence="2">
        <dbReference type="Rhea" id="RHEA:62161"/>
    </physiologicalReaction>
</comment>
<comment type="activity regulation">
    <text evidence="2">Magnesium-independent phospholipid phosphatase. Insensitive to N-ethylmaleimide.</text>
</comment>
<comment type="pathway">
    <text evidence="2">Lipid metabolism; phospholipid metabolism.</text>
</comment>
<comment type="subunit">
    <text evidence="2">Forms functional homodimers and homooligomers. Can also form heterooligomers with PLPP1 and PLPP3.</text>
</comment>
<comment type="subcellular location">
    <subcellularLocation>
        <location evidence="2">Membrane</location>
        <topology evidence="4">Multi-pass membrane protein</topology>
    </subcellularLocation>
    <subcellularLocation>
        <location evidence="2">Cell membrane</location>
        <topology evidence="4">Multi-pass membrane protein</topology>
    </subcellularLocation>
    <subcellularLocation>
        <location evidence="2">Early endosome membrane</location>
        <topology evidence="4">Multi-pass membrane protein</topology>
    </subcellularLocation>
    <subcellularLocation>
        <location evidence="2">Endoplasmic reticulum membrane</location>
        <topology evidence="4">Multi-pass membrane protein</topology>
    </subcellularLocation>
</comment>
<comment type="alternative products">
    <event type="alternative splicing"/>
    <isoform>
        <id>Q9DAX2-1</id>
        <name>1</name>
        <sequence type="displayed"/>
    </isoform>
    <isoform>
        <id>Q9DAX2-2</id>
        <name>2</name>
        <sequence type="described" ref="VSP_009654 VSP_009655"/>
    </isoform>
</comment>
<comment type="tissue specificity">
    <text>Expressed at high levels in lung, liver and kidney; at low levels in heart and brain, and was not detected in skeletal muscle.</text>
</comment>
<comment type="PTM">
    <text evidence="2">N-glycosylated.</text>
</comment>
<comment type="disruption phenotype">
    <text evidence="6">Mice lacking Plpp2 do not show overt phenotype (PubMed:10992322). Born at the expected Mendelian frequency they are perfectly viable and fertile (PubMed:10992322).</text>
</comment>
<comment type="similarity">
    <text evidence="9">Belongs to the PA-phosphatase related phosphoesterase family.</text>
</comment>
<gene>
    <name evidence="10" type="primary">Plpp2</name>
    <name type="synonym">Lpp2</name>
    <name type="synonym">Ppap2c</name>
</gene>
<feature type="chain" id="PRO_0000220910" description="Phospholipid phosphatase 2">
    <location>
        <begin position="1"/>
        <end position="276"/>
    </location>
</feature>
<feature type="topological domain" description="Cytoplasmic" evidence="9">
    <location>
        <begin position="1"/>
        <end position="4"/>
    </location>
</feature>
<feature type="transmembrane region" description="Helical" evidence="4">
    <location>
        <begin position="5"/>
        <end position="25"/>
    </location>
</feature>
<feature type="topological domain" description="Lumenal" evidence="9">
    <location>
        <begin position="26"/>
        <end position="51"/>
    </location>
</feature>
<feature type="transmembrane region" description="Helical" evidence="4">
    <location>
        <begin position="52"/>
        <end position="72"/>
    </location>
</feature>
<feature type="topological domain" description="Cytoplasmic" evidence="9">
    <location>
        <begin position="73"/>
        <end position="87"/>
    </location>
</feature>
<feature type="transmembrane region" description="Helical" evidence="4">
    <location>
        <begin position="88"/>
        <end position="108"/>
    </location>
</feature>
<feature type="topological domain" description="Lumenal" evidence="9">
    <location>
        <begin position="109"/>
        <end position="161"/>
    </location>
</feature>
<feature type="transmembrane region" description="Helical" evidence="4">
    <location>
        <begin position="162"/>
        <end position="182"/>
    </location>
</feature>
<feature type="topological domain" description="Cytoplasmic" evidence="9">
    <location>
        <begin position="183"/>
        <end position="189"/>
    </location>
</feature>
<feature type="transmembrane region" description="Helical" evidence="4">
    <location>
        <begin position="190"/>
        <end position="210"/>
    </location>
</feature>
<feature type="topological domain" description="Lumenal" evidence="9">
    <location>
        <begin position="211"/>
        <end position="218"/>
    </location>
</feature>
<feature type="transmembrane region" description="Helical" evidence="4">
    <location>
        <begin position="219"/>
        <end position="239"/>
    </location>
</feature>
<feature type="topological domain" description="Cytoplasmic" evidence="9">
    <location>
        <begin position="240"/>
        <end position="276"/>
    </location>
</feature>
<feature type="region of interest" description="Phosphatase sequence motif I" evidence="1">
    <location>
        <begin position="117"/>
        <end position="125"/>
    </location>
</feature>
<feature type="region of interest" description="Phosphatase sequence motif II" evidence="1">
    <location>
        <begin position="164"/>
        <end position="167"/>
    </location>
</feature>
<feature type="region of interest" description="Phosphatase sequence motif III" evidence="1">
    <location>
        <begin position="212"/>
        <end position="223"/>
    </location>
</feature>
<feature type="region of interest" description="Disordered" evidence="5">
    <location>
        <begin position="251"/>
        <end position="276"/>
    </location>
</feature>
<feature type="active site" description="Proton donors" evidence="1">
    <location>
        <position position="167"/>
    </location>
</feature>
<feature type="active site" description="Nucleophile" evidence="1">
    <location>
        <position position="219"/>
    </location>
</feature>
<feature type="site" description="Stabilizes the active site histidine for nucleophilic attack" evidence="1">
    <location>
        <position position="223"/>
    </location>
</feature>
<feature type="glycosylation site" description="N-linked (GlcNAc...) asparagine" evidence="4">
    <location>
        <position position="139"/>
    </location>
</feature>
<feature type="glycosylation site" description="N-linked (GlcNAc...) asparagine" evidence="7">
    <location>
        <position position="155"/>
    </location>
</feature>
<feature type="splice variant" id="VSP_009654" description="In isoform 2." evidence="8">
    <original>RYVSDFFKSRP</original>
    <variation>SPTCLTHRLCF</variation>
    <location>
        <begin position="240"/>
        <end position="250"/>
    </location>
</feature>
<feature type="splice variant" id="VSP_009655" description="In isoform 2." evidence="8">
    <location>
        <begin position="251"/>
        <end position="276"/>
    </location>
</feature>
<protein>
    <recommendedName>
        <fullName evidence="9">Phospholipid phosphatase 2</fullName>
        <ecNumber evidence="2">3.1.3.-</ecNumber>
        <ecNumber evidence="2">3.1.3.4</ecNumber>
    </recommendedName>
    <alternativeName>
        <fullName>Lipid phosphate phosphohydrolase 2</fullName>
    </alternativeName>
    <alternativeName>
        <fullName>PAP2-gamma</fullName>
        <shortName>PAP2-G</shortName>
    </alternativeName>
    <alternativeName>
        <fullName>Phosphatidate phosphohydrolase type 2c</fullName>
    </alternativeName>
    <alternativeName>
        <fullName>Phosphatidic acid phosphatase 2c</fullName>
        <shortName>PAP-2c</shortName>
        <shortName>PAP2c</shortName>
    </alternativeName>
</protein>
<evidence type="ECO:0000250" key="1">
    <source>
        <dbReference type="UniProtKB" id="O34349"/>
    </source>
</evidence>
<evidence type="ECO:0000250" key="2">
    <source>
        <dbReference type="UniProtKB" id="O43688"/>
    </source>
</evidence>
<evidence type="ECO:0000250" key="3">
    <source>
        <dbReference type="UniProtKB" id="Q8K593"/>
    </source>
</evidence>
<evidence type="ECO:0000255" key="4"/>
<evidence type="ECO:0000256" key="5">
    <source>
        <dbReference type="SAM" id="MobiDB-lite"/>
    </source>
</evidence>
<evidence type="ECO:0000269" key="6">
    <source>
    </source>
</evidence>
<evidence type="ECO:0000269" key="7">
    <source>
    </source>
</evidence>
<evidence type="ECO:0000303" key="8">
    <source>
    </source>
</evidence>
<evidence type="ECO:0000305" key="9"/>
<evidence type="ECO:0000312" key="10">
    <source>
        <dbReference type="MGI" id="MGI:1354945"/>
    </source>
</evidence>
<reference key="1">
    <citation type="journal article" date="2000" name="Genomics">
        <title>Cloning, expression, and chromosomal localization of a mouse gene homologous to the germ cell migration regulator wunen and to type 2 phosphatidic acid phosphatases.</title>
        <authorList>
            <person name="Zhang N."/>
            <person name="Copeland N.G."/>
            <person name="Gilbert D.J."/>
            <person name="Jenkins N.A."/>
            <person name="Gridley T."/>
        </authorList>
    </citation>
    <scope>NUCLEOTIDE SEQUENCE [MRNA] (ISOFORM 2)</scope>
    <source>
        <strain>C57BL/6J</strain>
    </source>
</reference>
<reference key="2">
    <citation type="journal article" date="2005" name="Science">
        <title>The transcriptional landscape of the mammalian genome.</title>
        <authorList>
            <person name="Carninci P."/>
            <person name="Kasukawa T."/>
            <person name="Katayama S."/>
            <person name="Gough J."/>
            <person name="Frith M.C."/>
            <person name="Maeda N."/>
            <person name="Oyama R."/>
            <person name="Ravasi T."/>
            <person name="Lenhard B."/>
            <person name="Wells C."/>
            <person name="Kodzius R."/>
            <person name="Shimokawa K."/>
            <person name="Bajic V.B."/>
            <person name="Brenner S.E."/>
            <person name="Batalov S."/>
            <person name="Forrest A.R."/>
            <person name="Zavolan M."/>
            <person name="Davis M.J."/>
            <person name="Wilming L.G."/>
            <person name="Aidinis V."/>
            <person name="Allen J.E."/>
            <person name="Ambesi-Impiombato A."/>
            <person name="Apweiler R."/>
            <person name="Aturaliya R.N."/>
            <person name="Bailey T.L."/>
            <person name="Bansal M."/>
            <person name="Baxter L."/>
            <person name="Beisel K.W."/>
            <person name="Bersano T."/>
            <person name="Bono H."/>
            <person name="Chalk A.M."/>
            <person name="Chiu K.P."/>
            <person name="Choudhary V."/>
            <person name="Christoffels A."/>
            <person name="Clutterbuck D.R."/>
            <person name="Crowe M.L."/>
            <person name="Dalla E."/>
            <person name="Dalrymple B.P."/>
            <person name="de Bono B."/>
            <person name="Della Gatta G."/>
            <person name="di Bernardo D."/>
            <person name="Down T."/>
            <person name="Engstrom P."/>
            <person name="Fagiolini M."/>
            <person name="Faulkner G."/>
            <person name="Fletcher C.F."/>
            <person name="Fukushima T."/>
            <person name="Furuno M."/>
            <person name="Futaki S."/>
            <person name="Gariboldi M."/>
            <person name="Georgii-Hemming P."/>
            <person name="Gingeras T.R."/>
            <person name="Gojobori T."/>
            <person name="Green R.E."/>
            <person name="Gustincich S."/>
            <person name="Harbers M."/>
            <person name="Hayashi Y."/>
            <person name="Hensch T.K."/>
            <person name="Hirokawa N."/>
            <person name="Hill D."/>
            <person name="Huminiecki L."/>
            <person name="Iacono M."/>
            <person name="Ikeo K."/>
            <person name="Iwama A."/>
            <person name="Ishikawa T."/>
            <person name="Jakt M."/>
            <person name="Kanapin A."/>
            <person name="Katoh M."/>
            <person name="Kawasawa Y."/>
            <person name="Kelso J."/>
            <person name="Kitamura H."/>
            <person name="Kitano H."/>
            <person name="Kollias G."/>
            <person name="Krishnan S.P."/>
            <person name="Kruger A."/>
            <person name="Kummerfeld S.K."/>
            <person name="Kurochkin I.V."/>
            <person name="Lareau L.F."/>
            <person name="Lazarevic D."/>
            <person name="Lipovich L."/>
            <person name="Liu J."/>
            <person name="Liuni S."/>
            <person name="McWilliam S."/>
            <person name="Madan Babu M."/>
            <person name="Madera M."/>
            <person name="Marchionni L."/>
            <person name="Matsuda H."/>
            <person name="Matsuzawa S."/>
            <person name="Miki H."/>
            <person name="Mignone F."/>
            <person name="Miyake S."/>
            <person name="Morris K."/>
            <person name="Mottagui-Tabar S."/>
            <person name="Mulder N."/>
            <person name="Nakano N."/>
            <person name="Nakauchi H."/>
            <person name="Ng P."/>
            <person name="Nilsson R."/>
            <person name="Nishiguchi S."/>
            <person name="Nishikawa S."/>
            <person name="Nori F."/>
            <person name="Ohara O."/>
            <person name="Okazaki Y."/>
            <person name="Orlando V."/>
            <person name="Pang K.C."/>
            <person name="Pavan W.J."/>
            <person name="Pavesi G."/>
            <person name="Pesole G."/>
            <person name="Petrovsky N."/>
            <person name="Piazza S."/>
            <person name="Reed J."/>
            <person name="Reid J.F."/>
            <person name="Ring B.Z."/>
            <person name="Ringwald M."/>
            <person name="Rost B."/>
            <person name="Ruan Y."/>
            <person name="Salzberg S.L."/>
            <person name="Sandelin A."/>
            <person name="Schneider C."/>
            <person name="Schoenbach C."/>
            <person name="Sekiguchi K."/>
            <person name="Semple C.A."/>
            <person name="Seno S."/>
            <person name="Sessa L."/>
            <person name="Sheng Y."/>
            <person name="Shibata Y."/>
            <person name="Shimada H."/>
            <person name="Shimada K."/>
            <person name="Silva D."/>
            <person name="Sinclair B."/>
            <person name="Sperling S."/>
            <person name="Stupka E."/>
            <person name="Sugiura K."/>
            <person name="Sultana R."/>
            <person name="Takenaka Y."/>
            <person name="Taki K."/>
            <person name="Tammoja K."/>
            <person name="Tan S.L."/>
            <person name="Tang S."/>
            <person name="Taylor M.S."/>
            <person name="Tegner J."/>
            <person name="Teichmann S.A."/>
            <person name="Ueda H.R."/>
            <person name="van Nimwegen E."/>
            <person name="Verardo R."/>
            <person name="Wei C.L."/>
            <person name="Yagi K."/>
            <person name="Yamanishi H."/>
            <person name="Zabarovsky E."/>
            <person name="Zhu S."/>
            <person name="Zimmer A."/>
            <person name="Hide W."/>
            <person name="Bult C."/>
            <person name="Grimmond S.M."/>
            <person name="Teasdale R.D."/>
            <person name="Liu E.T."/>
            <person name="Brusic V."/>
            <person name="Quackenbush J."/>
            <person name="Wahlestedt C."/>
            <person name="Mattick J.S."/>
            <person name="Hume D.A."/>
            <person name="Kai C."/>
            <person name="Sasaki D."/>
            <person name="Tomaru Y."/>
            <person name="Fukuda S."/>
            <person name="Kanamori-Katayama M."/>
            <person name="Suzuki M."/>
            <person name="Aoki J."/>
            <person name="Arakawa T."/>
            <person name="Iida J."/>
            <person name="Imamura K."/>
            <person name="Itoh M."/>
            <person name="Kato T."/>
            <person name="Kawaji H."/>
            <person name="Kawagashira N."/>
            <person name="Kawashima T."/>
            <person name="Kojima M."/>
            <person name="Kondo S."/>
            <person name="Konno H."/>
            <person name="Nakano K."/>
            <person name="Ninomiya N."/>
            <person name="Nishio T."/>
            <person name="Okada M."/>
            <person name="Plessy C."/>
            <person name="Shibata K."/>
            <person name="Shiraki T."/>
            <person name="Suzuki S."/>
            <person name="Tagami M."/>
            <person name="Waki K."/>
            <person name="Watahiki A."/>
            <person name="Okamura-Oho Y."/>
            <person name="Suzuki H."/>
            <person name="Kawai J."/>
            <person name="Hayashizaki Y."/>
        </authorList>
    </citation>
    <scope>NUCLEOTIDE SEQUENCE [LARGE SCALE MRNA] (ISOFORM 1)</scope>
    <source>
        <strain>C57BL/6J</strain>
        <tissue>Embryo</tissue>
        <tissue>Placenta</tissue>
    </source>
</reference>
<reference key="3">
    <citation type="journal article" date="2004" name="Genome Res.">
        <title>The status, quality, and expansion of the NIH full-length cDNA project: the Mammalian Gene Collection (MGC).</title>
        <authorList>
            <consortium name="The MGC Project Team"/>
        </authorList>
    </citation>
    <scope>NUCLEOTIDE SEQUENCE [LARGE SCALE MRNA] (ISOFORM 1)</scope>
    <source>
        <tissue>Mammary tumor</tissue>
    </source>
</reference>
<reference key="4">
    <citation type="journal article" date="2009" name="Mol. Cell. Proteomics">
        <title>The mouse C2C12 myoblast cell surface N-linked glycoproteome: identification, glycosite occupancy, and membrane orientation.</title>
        <authorList>
            <person name="Gundry R.L."/>
            <person name="Raginski K."/>
            <person name="Tarasova Y."/>
            <person name="Tchernyshyov I."/>
            <person name="Bausch-Fluck D."/>
            <person name="Elliott S.T."/>
            <person name="Boheler K.R."/>
            <person name="Van Eyk J.E."/>
            <person name="Wollscheid B."/>
        </authorList>
    </citation>
    <scope>GLYCOSYLATION [LARGE SCALE ANALYSIS] AT ASN-155</scope>
    <source>
        <tissue>Myoblast</tissue>
    </source>
</reference>
<reference key="5">
    <citation type="journal article" date="2000" name="Genesis">
        <title>Mice mutant for Ppap2c, a homolog of the germ cell migration regulator wunen, are viable and fertile.</title>
        <authorList>
            <person name="Zhang N."/>
            <person name="Sundberg J.P."/>
            <person name="Gridley T."/>
        </authorList>
    </citation>
    <scope>DISRUPTION PHENOTYPE</scope>
</reference>
<keyword id="KW-0025">Alternative splicing</keyword>
<keyword id="KW-1003">Cell membrane</keyword>
<keyword id="KW-0256">Endoplasmic reticulum</keyword>
<keyword id="KW-0967">Endosome</keyword>
<keyword id="KW-0325">Glycoprotein</keyword>
<keyword id="KW-0378">Hydrolase</keyword>
<keyword id="KW-0443">Lipid metabolism</keyword>
<keyword id="KW-0472">Membrane</keyword>
<keyword id="KW-1185">Reference proteome</keyword>
<keyword id="KW-0812">Transmembrane</keyword>
<keyword id="KW-1133">Transmembrane helix</keyword>
<sequence>MERRWVFVLLDVLCVLVASLPFIILTLVNAPYKRGFYCGDDSIRYPYRPDTITHGLMAGVIITATVILVSLGEAYLVYTDRLYSRSNFNNYVAAIYKVLGTFLFGAAVSQSLTDLAKYMIGRLRPSFLAVCDPDWSQVNCSGYVQLEVCRGSPANVTEARLSFYSGHSSFGMYCMLFLALYVQARLCWKWARLLRPTVQFFLVAFAIYVGYTRVSDHKHHWSDVLVGLLQGALVACLTVRYVSDFFKSRPPQPCQEDEVPERKPSLSLTLTLGDRP</sequence>
<name>PLPP2_MOUSE</name>
<proteinExistence type="evidence at protein level"/>